<dbReference type="EC" id="2.7.7.6" evidence="1"/>
<dbReference type="EMBL" id="CP000099">
    <property type="protein sequence ID" value="AAZ70582.1"/>
    <property type="molecule type" value="Genomic_DNA"/>
</dbReference>
<dbReference type="SMR" id="Q46C10"/>
<dbReference type="STRING" id="269797.Mbar_A1637"/>
<dbReference type="PaxDb" id="269797-Mbar_A1637"/>
<dbReference type="KEGG" id="mba:Mbar_A1637"/>
<dbReference type="eggNOG" id="arCOG04111">
    <property type="taxonomic scope" value="Archaea"/>
</dbReference>
<dbReference type="HOGENOM" id="CLU_090381_5_3_2"/>
<dbReference type="OrthoDB" id="24205at2157"/>
<dbReference type="GO" id="GO:0005737">
    <property type="term" value="C:cytoplasm"/>
    <property type="evidence" value="ECO:0007669"/>
    <property type="project" value="UniProtKB-SubCell"/>
</dbReference>
<dbReference type="GO" id="GO:0000428">
    <property type="term" value="C:DNA-directed RNA polymerase complex"/>
    <property type="evidence" value="ECO:0007669"/>
    <property type="project" value="UniProtKB-KW"/>
</dbReference>
<dbReference type="GO" id="GO:0003677">
    <property type="term" value="F:DNA binding"/>
    <property type="evidence" value="ECO:0007669"/>
    <property type="project" value="InterPro"/>
</dbReference>
<dbReference type="GO" id="GO:0003899">
    <property type="term" value="F:DNA-directed RNA polymerase activity"/>
    <property type="evidence" value="ECO:0007669"/>
    <property type="project" value="UniProtKB-UniRule"/>
</dbReference>
<dbReference type="GO" id="GO:0046983">
    <property type="term" value="F:protein dimerization activity"/>
    <property type="evidence" value="ECO:0007669"/>
    <property type="project" value="InterPro"/>
</dbReference>
<dbReference type="GO" id="GO:0006351">
    <property type="term" value="P:DNA-templated transcription"/>
    <property type="evidence" value="ECO:0007669"/>
    <property type="project" value="UniProtKB-UniRule"/>
</dbReference>
<dbReference type="CDD" id="cd06927">
    <property type="entry name" value="RNAP_L"/>
    <property type="match status" value="1"/>
</dbReference>
<dbReference type="Gene3D" id="3.30.1360.10">
    <property type="entry name" value="RNA polymerase, RBP11-like subunit"/>
    <property type="match status" value="1"/>
</dbReference>
<dbReference type="HAMAP" id="MF_00261">
    <property type="entry name" value="RNApol_arch_Rpo11"/>
    <property type="match status" value="1"/>
</dbReference>
<dbReference type="InterPro" id="IPR036603">
    <property type="entry name" value="RBP11-like"/>
</dbReference>
<dbReference type="InterPro" id="IPR009025">
    <property type="entry name" value="RBP11-like_dimer"/>
</dbReference>
<dbReference type="InterPro" id="IPR008193">
    <property type="entry name" value="RNA_pol_Rpb11_13-16kDa_CS"/>
</dbReference>
<dbReference type="InterPro" id="IPR022905">
    <property type="entry name" value="Rpo11-like"/>
</dbReference>
<dbReference type="NCBIfam" id="NF002237">
    <property type="entry name" value="PRK01146.2-1"/>
    <property type="match status" value="1"/>
</dbReference>
<dbReference type="PANTHER" id="PTHR13946">
    <property type="entry name" value="DNA-DIRECTED RNA POLYMERASE I,II,III"/>
    <property type="match status" value="1"/>
</dbReference>
<dbReference type="PANTHER" id="PTHR13946:SF28">
    <property type="entry name" value="DNA-DIRECTED RNA POLYMERASES I AND III SUBUNIT RPAC2"/>
    <property type="match status" value="1"/>
</dbReference>
<dbReference type="Pfam" id="PF13656">
    <property type="entry name" value="RNA_pol_L_2"/>
    <property type="match status" value="1"/>
</dbReference>
<dbReference type="SUPFAM" id="SSF55257">
    <property type="entry name" value="RBP11-like subunits of RNA polymerase"/>
    <property type="match status" value="1"/>
</dbReference>
<dbReference type="PROSITE" id="PS01154">
    <property type="entry name" value="RNA_POL_L_13KD"/>
    <property type="match status" value="1"/>
</dbReference>
<accession>Q46C10</accession>
<keyword id="KW-0963">Cytoplasm</keyword>
<keyword id="KW-0240">DNA-directed RNA polymerase</keyword>
<keyword id="KW-0548">Nucleotidyltransferase</keyword>
<keyword id="KW-0804">Transcription</keyword>
<keyword id="KW-0808">Transferase</keyword>
<sequence>MELNILSKTDNELEVKLKGETHTLLNILKDLLIKDQRVEIAFYDMKYVSISDPILYIKTDGTNPIEVLKDAASQIISQCDEFTDVFSKAVNA</sequence>
<reference key="1">
    <citation type="journal article" date="2006" name="J. Bacteriol.">
        <title>The Methanosarcina barkeri genome: comparative analysis with Methanosarcina acetivorans and Methanosarcina mazei reveals extensive rearrangement within methanosarcinal genomes.</title>
        <authorList>
            <person name="Maeder D.L."/>
            <person name="Anderson I."/>
            <person name="Brettin T.S."/>
            <person name="Bruce D.C."/>
            <person name="Gilna P."/>
            <person name="Han C.S."/>
            <person name="Lapidus A."/>
            <person name="Metcalf W.W."/>
            <person name="Saunders E."/>
            <person name="Tapia R."/>
            <person name="Sowers K.R."/>
        </authorList>
    </citation>
    <scope>NUCLEOTIDE SEQUENCE [LARGE SCALE GENOMIC DNA]</scope>
    <source>
        <strain>Fusaro / DSM 804</strain>
    </source>
</reference>
<feature type="chain" id="PRO_0000232468" description="DNA-directed RNA polymerase subunit Rpo11">
    <location>
        <begin position="1"/>
        <end position="92"/>
    </location>
</feature>
<gene>
    <name evidence="1" type="primary">rpo11</name>
    <name evidence="1" type="synonym">rpoL</name>
    <name type="ordered locus">Mbar_A1637</name>
</gene>
<organism>
    <name type="scientific">Methanosarcina barkeri (strain Fusaro / DSM 804)</name>
    <dbReference type="NCBI Taxonomy" id="269797"/>
    <lineage>
        <taxon>Archaea</taxon>
        <taxon>Methanobacteriati</taxon>
        <taxon>Methanobacteriota</taxon>
        <taxon>Stenosarchaea group</taxon>
        <taxon>Methanomicrobia</taxon>
        <taxon>Methanosarcinales</taxon>
        <taxon>Methanosarcinaceae</taxon>
        <taxon>Methanosarcina</taxon>
    </lineage>
</organism>
<name>RPO11_METBF</name>
<evidence type="ECO:0000255" key="1">
    <source>
        <dbReference type="HAMAP-Rule" id="MF_00261"/>
    </source>
</evidence>
<comment type="function">
    <text evidence="1">DNA-dependent RNA polymerase (RNAP) catalyzes the transcription of DNA into RNA using the four ribonucleoside triphosphates as substrates.</text>
</comment>
<comment type="catalytic activity">
    <reaction evidence="1">
        <text>RNA(n) + a ribonucleoside 5'-triphosphate = RNA(n+1) + diphosphate</text>
        <dbReference type="Rhea" id="RHEA:21248"/>
        <dbReference type="Rhea" id="RHEA-COMP:14527"/>
        <dbReference type="Rhea" id="RHEA-COMP:17342"/>
        <dbReference type="ChEBI" id="CHEBI:33019"/>
        <dbReference type="ChEBI" id="CHEBI:61557"/>
        <dbReference type="ChEBI" id="CHEBI:140395"/>
        <dbReference type="EC" id="2.7.7.6"/>
    </reaction>
</comment>
<comment type="subunit">
    <text evidence="1">Part of the RNA polymerase complex.</text>
</comment>
<comment type="subcellular location">
    <subcellularLocation>
        <location evidence="1">Cytoplasm</location>
    </subcellularLocation>
</comment>
<comment type="similarity">
    <text evidence="1">Belongs to the archaeal Rpo11/eukaryotic RPB11/RPC19 RNA polymerase subunit family.</text>
</comment>
<proteinExistence type="inferred from homology"/>
<protein>
    <recommendedName>
        <fullName evidence="1">DNA-directed RNA polymerase subunit Rpo11</fullName>
        <ecNumber evidence="1">2.7.7.6</ecNumber>
    </recommendedName>
    <alternativeName>
        <fullName evidence="1">DNA-directed RNA polymerase subunit L</fullName>
    </alternativeName>
</protein>